<sequence>MPDNMPEEQAHPTRCGFVALIGAPNVGKSTLVNALVGSKVTIVSRKVQTTRALIRGIVVEGNAQIVLVDTPGIFTPKRRLDRAMVSTAWSGAHDADMVCVLLDARAGLDEEAEAIFTKLEAVKHPKFLVINKIDLVAREKLLALAQRANERIAFRETFMVAALSGDGVDDLRRALAAAMPEGPYLYPEDQMSDAPLRHLAAEITREKIYRNLHQELPYQSTVETESWKEMRNGSVRIEQTIFVERDSQRKIVLGKGGATIKAIGADARKEIAEIVGQPVHLFLFVKVRDNWGDDPERYREMGLEFPKE</sequence>
<dbReference type="EMBL" id="CP001196">
    <property type="protein sequence ID" value="ACI92968.1"/>
    <property type="molecule type" value="Genomic_DNA"/>
</dbReference>
<dbReference type="EMBL" id="CP002826">
    <property type="protein sequence ID" value="AEI06877.1"/>
    <property type="status" value="ALT_INIT"/>
    <property type="molecule type" value="Genomic_DNA"/>
</dbReference>
<dbReference type="SMR" id="B6JGG2"/>
<dbReference type="STRING" id="504832.OCA5_c21740"/>
<dbReference type="KEGG" id="oca:OCAR_5843"/>
<dbReference type="KEGG" id="ocg:OCA5_c21740"/>
<dbReference type="PATRIC" id="fig|504832.7.peg.2296"/>
<dbReference type="eggNOG" id="COG1159">
    <property type="taxonomic scope" value="Bacteria"/>
</dbReference>
<dbReference type="HOGENOM" id="CLU_038009_1_1_5"/>
<dbReference type="Proteomes" id="UP000007730">
    <property type="component" value="Chromosome"/>
</dbReference>
<dbReference type="GO" id="GO:0005829">
    <property type="term" value="C:cytosol"/>
    <property type="evidence" value="ECO:0007669"/>
    <property type="project" value="TreeGrafter"/>
</dbReference>
<dbReference type="GO" id="GO:0005886">
    <property type="term" value="C:plasma membrane"/>
    <property type="evidence" value="ECO:0007669"/>
    <property type="project" value="UniProtKB-SubCell"/>
</dbReference>
<dbReference type="GO" id="GO:0005525">
    <property type="term" value="F:GTP binding"/>
    <property type="evidence" value="ECO:0007669"/>
    <property type="project" value="UniProtKB-UniRule"/>
</dbReference>
<dbReference type="GO" id="GO:0003924">
    <property type="term" value="F:GTPase activity"/>
    <property type="evidence" value="ECO:0007669"/>
    <property type="project" value="UniProtKB-UniRule"/>
</dbReference>
<dbReference type="GO" id="GO:0043024">
    <property type="term" value="F:ribosomal small subunit binding"/>
    <property type="evidence" value="ECO:0007669"/>
    <property type="project" value="TreeGrafter"/>
</dbReference>
<dbReference type="GO" id="GO:0070181">
    <property type="term" value="F:small ribosomal subunit rRNA binding"/>
    <property type="evidence" value="ECO:0007669"/>
    <property type="project" value="UniProtKB-UniRule"/>
</dbReference>
<dbReference type="GO" id="GO:0000028">
    <property type="term" value="P:ribosomal small subunit assembly"/>
    <property type="evidence" value="ECO:0007669"/>
    <property type="project" value="TreeGrafter"/>
</dbReference>
<dbReference type="CDD" id="cd04163">
    <property type="entry name" value="Era"/>
    <property type="match status" value="1"/>
</dbReference>
<dbReference type="CDD" id="cd22534">
    <property type="entry name" value="KH-II_Era"/>
    <property type="match status" value="1"/>
</dbReference>
<dbReference type="FunFam" id="3.40.50.300:FF:001190">
    <property type="entry name" value="GTP-binding protein ERG"/>
    <property type="match status" value="1"/>
</dbReference>
<dbReference type="FunFam" id="3.30.300.20:FF:000031">
    <property type="entry name" value="GTPase Era"/>
    <property type="match status" value="1"/>
</dbReference>
<dbReference type="Gene3D" id="3.30.300.20">
    <property type="match status" value="1"/>
</dbReference>
<dbReference type="Gene3D" id="3.40.50.300">
    <property type="entry name" value="P-loop containing nucleotide triphosphate hydrolases"/>
    <property type="match status" value="1"/>
</dbReference>
<dbReference type="HAMAP" id="MF_00367">
    <property type="entry name" value="GTPase_Era"/>
    <property type="match status" value="1"/>
</dbReference>
<dbReference type="InterPro" id="IPR030388">
    <property type="entry name" value="G_ERA_dom"/>
</dbReference>
<dbReference type="InterPro" id="IPR006073">
    <property type="entry name" value="GTP-bd"/>
</dbReference>
<dbReference type="InterPro" id="IPR005662">
    <property type="entry name" value="GTPase_Era-like"/>
</dbReference>
<dbReference type="InterPro" id="IPR015946">
    <property type="entry name" value="KH_dom-like_a/b"/>
</dbReference>
<dbReference type="InterPro" id="IPR004044">
    <property type="entry name" value="KH_dom_type_2"/>
</dbReference>
<dbReference type="InterPro" id="IPR009019">
    <property type="entry name" value="KH_sf_prok-type"/>
</dbReference>
<dbReference type="InterPro" id="IPR027417">
    <property type="entry name" value="P-loop_NTPase"/>
</dbReference>
<dbReference type="InterPro" id="IPR005225">
    <property type="entry name" value="Small_GTP-bd"/>
</dbReference>
<dbReference type="NCBIfam" id="TIGR00436">
    <property type="entry name" value="era"/>
    <property type="match status" value="1"/>
</dbReference>
<dbReference type="NCBIfam" id="NF000908">
    <property type="entry name" value="PRK00089.1"/>
    <property type="match status" value="1"/>
</dbReference>
<dbReference type="NCBIfam" id="TIGR00231">
    <property type="entry name" value="small_GTP"/>
    <property type="match status" value="1"/>
</dbReference>
<dbReference type="PANTHER" id="PTHR42698">
    <property type="entry name" value="GTPASE ERA"/>
    <property type="match status" value="1"/>
</dbReference>
<dbReference type="PANTHER" id="PTHR42698:SF1">
    <property type="entry name" value="GTPASE ERA, MITOCHONDRIAL"/>
    <property type="match status" value="1"/>
</dbReference>
<dbReference type="Pfam" id="PF07650">
    <property type="entry name" value="KH_2"/>
    <property type="match status" value="1"/>
</dbReference>
<dbReference type="Pfam" id="PF01926">
    <property type="entry name" value="MMR_HSR1"/>
    <property type="match status" value="1"/>
</dbReference>
<dbReference type="SUPFAM" id="SSF52540">
    <property type="entry name" value="P-loop containing nucleoside triphosphate hydrolases"/>
    <property type="match status" value="1"/>
</dbReference>
<dbReference type="SUPFAM" id="SSF54814">
    <property type="entry name" value="Prokaryotic type KH domain (KH-domain type II)"/>
    <property type="match status" value="1"/>
</dbReference>
<dbReference type="PROSITE" id="PS51713">
    <property type="entry name" value="G_ERA"/>
    <property type="match status" value="1"/>
</dbReference>
<dbReference type="PROSITE" id="PS50823">
    <property type="entry name" value="KH_TYPE_2"/>
    <property type="match status" value="1"/>
</dbReference>
<organism>
    <name type="scientific">Afipia carboxidovorans (strain ATCC 49405 / DSM 1227 / KCTC 32145 / OM5)</name>
    <name type="common">Oligotropha carboxidovorans</name>
    <dbReference type="NCBI Taxonomy" id="504832"/>
    <lineage>
        <taxon>Bacteria</taxon>
        <taxon>Pseudomonadati</taxon>
        <taxon>Pseudomonadota</taxon>
        <taxon>Alphaproteobacteria</taxon>
        <taxon>Hyphomicrobiales</taxon>
        <taxon>Nitrobacteraceae</taxon>
        <taxon>Afipia</taxon>
    </lineage>
</organism>
<reference key="1">
    <citation type="journal article" date="2008" name="J. Bacteriol.">
        <title>Genome sequence of the chemolithoautotrophic bacterium Oligotropha carboxidovorans OM5T.</title>
        <authorList>
            <person name="Paul D."/>
            <person name="Bridges S."/>
            <person name="Burgess S.C."/>
            <person name="Dandass Y."/>
            <person name="Lawrence M.L."/>
        </authorList>
    </citation>
    <scope>NUCLEOTIDE SEQUENCE [LARGE SCALE GENOMIC DNA]</scope>
    <source>
        <strain>ATCC 49405 / DSM 1227 / KCTC 32145 / OM5</strain>
    </source>
</reference>
<reference key="2">
    <citation type="journal article" date="2011" name="J. Bacteriol.">
        <title>Complete genome sequences of the chemolithoautotrophic Oligotropha carboxidovorans strains OM4 and OM5.</title>
        <authorList>
            <person name="Volland S."/>
            <person name="Rachinger M."/>
            <person name="Strittmatter A."/>
            <person name="Daniel R."/>
            <person name="Gottschalk G."/>
            <person name="Meyer O."/>
        </authorList>
    </citation>
    <scope>NUCLEOTIDE SEQUENCE [LARGE SCALE GENOMIC DNA]</scope>
    <source>
        <strain>ATCC 49405 / DSM 1227 / KCTC 32145 / OM5</strain>
    </source>
</reference>
<gene>
    <name evidence="1" type="primary">era</name>
    <name type="ordered locus">OCAR_5843</name>
    <name type="ordered locus">OCA5_c21740</name>
</gene>
<evidence type="ECO:0000255" key="1">
    <source>
        <dbReference type="HAMAP-Rule" id="MF_00367"/>
    </source>
</evidence>
<evidence type="ECO:0000255" key="2">
    <source>
        <dbReference type="PROSITE-ProRule" id="PRU01050"/>
    </source>
</evidence>
<evidence type="ECO:0000305" key="3"/>
<accession>B6JGG2</accession>
<accession>F8BXP0</accession>
<keyword id="KW-0997">Cell inner membrane</keyword>
<keyword id="KW-1003">Cell membrane</keyword>
<keyword id="KW-0963">Cytoplasm</keyword>
<keyword id="KW-0342">GTP-binding</keyword>
<keyword id="KW-0472">Membrane</keyword>
<keyword id="KW-0547">Nucleotide-binding</keyword>
<keyword id="KW-1185">Reference proteome</keyword>
<keyword id="KW-0690">Ribosome biogenesis</keyword>
<keyword id="KW-0694">RNA-binding</keyword>
<keyword id="KW-0699">rRNA-binding</keyword>
<proteinExistence type="inferred from homology"/>
<feature type="chain" id="PRO_1000121344" description="GTPase Era">
    <location>
        <begin position="1"/>
        <end position="308"/>
    </location>
</feature>
<feature type="domain" description="Era-type G" evidence="2">
    <location>
        <begin position="14"/>
        <end position="181"/>
    </location>
</feature>
<feature type="domain" description="KH type-2" evidence="1">
    <location>
        <begin position="212"/>
        <end position="289"/>
    </location>
</feature>
<feature type="region of interest" description="G1" evidence="2">
    <location>
        <begin position="22"/>
        <end position="29"/>
    </location>
</feature>
<feature type="region of interest" description="G2" evidence="2">
    <location>
        <begin position="48"/>
        <end position="52"/>
    </location>
</feature>
<feature type="region of interest" description="G3" evidence="2">
    <location>
        <begin position="69"/>
        <end position="72"/>
    </location>
</feature>
<feature type="region of interest" description="G4" evidence="2">
    <location>
        <begin position="131"/>
        <end position="134"/>
    </location>
</feature>
<feature type="region of interest" description="G5" evidence="2">
    <location>
        <begin position="160"/>
        <end position="162"/>
    </location>
</feature>
<feature type="binding site" evidence="1">
    <location>
        <begin position="22"/>
        <end position="29"/>
    </location>
    <ligand>
        <name>GTP</name>
        <dbReference type="ChEBI" id="CHEBI:37565"/>
    </ligand>
</feature>
<feature type="binding site" evidence="1">
    <location>
        <begin position="69"/>
        <end position="73"/>
    </location>
    <ligand>
        <name>GTP</name>
        <dbReference type="ChEBI" id="CHEBI:37565"/>
    </ligand>
</feature>
<feature type="binding site" evidence="1">
    <location>
        <begin position="131"/>
        <end position="134"/>
    </location>
    <ligand>
        <name>GTP</name>
        <dbReference type="ChEBI" id="CHEBI:37565"/>
    </ligand>
</feature>
<comment type="function">
    <text evidence="1">An essential GTPase that binds both GDP and GTP, with rapid nucleotide exchange. Plays a role in 16S rRNA processing and 30S ribosomal subunit biogenesis and possibly also in cell cycle regulation and energy metabolism.</text>
</comment>
<comment type="subunit">
    <text evidence="1">Monomer.</text>
</comment>
<comment type="subcellular location">
    <subcellularLocation>
        <location>Cytoplasm</location>
    </subcellularLocation>
    <subcellularLocation>
        <location evidence="1">Cell inner membrane</location>
        <topology evidence="1">Peripheral membrane protein</topology>
    </subcellularLocation>
</comment>
<comment type="similarity">
    <text evidence="1 2">Belongs to the TRAFAC class TrmE-Era-EngA-EngB-Septin-like GTPase superfamily. Era GTPase family.</text>
</comment>
<comment type="sequence caution" evidence="3">
    <conflict type="erroneous initiation">
        <sequence resource="EMBL-CDS" id="AEI06877"/>
    </conflict>
    <text>Truncated N-terminus.</text>
</comment>
<name>ERA_AFIC5</name>
<protein>
    <recommendedName>
        <fullName evidence="1">GTPase Era</fullName>
    </recommendedName>
</protein>